<proteinExistence type="evidence at protein level"/>
<comment type="function">
    <text evidence="9">Mediates depolymerization of hyaluronic acid (HA) via the cell membrane-associated clathrin-coated pit endocytic pathway. Binds to hyaluronic acid. Hydrolyzes high molecular weight hyaluronic acid to produce an intermediate-sized product, a process that may occur through rapid vesicle endocytosis and recycling without intracytoplasmic accumulation or digestion in lysosomes. Involved in hyaluronan catabolism in the dermis of the skin and arthritic synovium. Positively regulates epithelial-mesenchymal transition (EMT), and hence tumor cell growth, invasion and cancer dissemination. In collaboration with HSPA5/BIP, promotes cancer cell migration in a calcium and PKC-dependent manner. May be involved in hearing.</text>
</comment>
<comment type="catalytic activity">
    <reaction evidence="9">
        <text>Random hydrolysis of (1-&gt;4)-linkages between N-acetyl-beta-D-glucosamine and D-glucuronate residues in hyaluronate.</text>
        <dbReference type="EC" id="3.2.1.35"/>
    </reaction>
</comment>
<comment type="activity regulation">
    <text evidence="1">Activity is up-regulated by histamine.</text>
</comment>
<comment type="subunit">
    <text evidence="1">Interacts with EPHA2 and ITPR3. Interacts with HSPA5/BIP; the interaction induces calcium leakage from the endoplasmic reticulum and cell migration. Interacts with clathrin heavy chain/CLTC (By similarity).</text>
</comment>
<comment type="subcellular location">
    <subcellularLocation>
        <location evidence="1">Nucleus</location>
    </subcellularLocation>
    <subcellularLocation>
        <location evidence="1">Cytoplasm</location>
    </subcellularLocation>
    <subcellularLocation>
        <location evidence="1">Endoplasmic reticulum</location>
    </subcellularLocation>
    <subcellularLocation>
        <location evidence="1">Cell membrane</location>
    </subcellularLocation>
    <subcellularLocation>
        <location evidence="8 9">Membrane</location>
        <location evidence="8 9">Clathrin-coated pit</location>
    </subcellularLocation>
    <subcellularLocation>
        <location evidence="1">Secreted</location>
    </subcellularLocation>
    <text evidence="1">Retained in the endoplasmic reticulum (ER) in a HSPA5/BIP-dependent manner. Strongly detected in the cytoplasm of breast carcinoma cells, whereas poorly detected in adjacent normal epithelial cells, stromal cells, or benign breast tissues. Localized in the nucleus and cytoplasm of colon adenocarcinomas (By similarity). Colocalized with clathrin heavy chain/CLTC in clathrin-coated vesicles.</text>
</comment>
<comment type="alternative products">
    <event type="alternative splicing"/>
    <isoform>
        <id>Q8BI06-1</id>
        <name>1</name>
        <sequence type="displayed"/>
    </isoform>
    <isoform>
        <id>Q8BI06-2</id>
        <name>2</name>
        <sequence type="described" ref="VSP_009816"/>
    </isoform>
    <isoform>
        <id>Q8BI06-3</id>
        <name>3</name>
        <sequence type="described" ref="VSP_009817"/>
    </isoform>
</comment>
<comment type="tissue specificity">
    <text evidence="6 7 8">Expressed in Deiters' cells and various supporting cells in the organ of Corti including inner phalangeal, border, inner and outer pillar cells (at protein level). Weakly expressed in brain and testis. In ear, it is specifically expressed in inner ear. Expressed in Deiters' cells in the organ of Corti at P0 (postnatal day zero) before the onset of hearing, but disappears by day P7. Also expressed in fibrocytes of the spiral ligament and the spiral limbus through to P21, when the cochlea matures.</text>
</comment>
<comment type="developmental stage">
    <text evidence="6">Expressed throughout development.</text>
</comment>
<comment type="domain">
    <text evidence="1">The signal sequence is essential in mediating its proper translocation, hyaluronic acid (HA) degradation activity and secretion.</text>
</comment>
<comment type="PTM">
    <text evidence="1">N-glycosylated; glycosylation is not necessary for HA-binding.</text>
</comment>
<comment type="similarity">
    <text evidence="13">Belongs to the CEMIP family.</text>
</comment>
<comment type="sequence caution" evidence="13">
    <conflict type="erroneous initiation">
        <sequence resource="EMBL-CDS" id="AAH56981"/>
    </conflict>
</comment>
<comment type="sequence caution" evidence="13">
    <conflict type="frameshift">
        <sequence resource="EMBL-CDS" id="BAC29586"/>
    </conflict>
</comment>
<feature type="signal peptide" evidence="1">
    <location>
        <begin position="1"/>
        <end position="30"/>
    </location>
</feature>
<feature type="chain" id="PRO_0000021539" description="Cell migration-inducing and hyaluronan-binding protein">
    <location>
        <begin position="31"/>
        <end position="1361"/>
    </location>
</feature>
<feature type="domain" description="G8" evidence="4">
    <location>
        <begin position="44"/>
        <end position="166"/>
    </location>
</feature>
<feature type="domain" description="GG-type lectin 1" evidence="5">
    <location>
        <begin position="176"/>
        <end position="317"/>
    </location>
</feature>
<feature type="repeat" description="PbH1 1">
    <location>
        <begin position="572"/>
        <end position="594"/>
    </location>
</feature>
<feature type="repeat" description="PbH1 2">
    <location>
        <begin position="595"/>
        <end position="617"/>
    </location>
</feature>
<feature type="repeat" description="PbH1 3">
    <location>
        <begin position="719"/>
        <end position="741"/>
    </location>
</feature>
<feature type="repeat" description="PbH1 4">
    <location>
        <begin position="798"/>
        <end position="819"/>
    </location>
</feature>
<feature type="domain" description="GG-type lectin 2" evidence="5">
    <location>
        <begin position="1227"/>
        <end position="1361"/>
    </location>
</feature>
<feature type="region of interest" description="Necessary for its endoplasmic reticulum (ER) retention and interaction with HSPA5" evidence="1">
    <location>
        <begin position="295"/>
        <end position="591"/>
    </location>
</feature>
<feature type="glycosylation site" description="N-linked (GlcNAc...) asparagine" evidence="3">
    <location>
        <position position="119"/>
    </location>
</feature>
<feature type="glycosylation site" description="N-linked (GlcNAc...) asparagine" evidence="3">
    <location>
        <position position="165"/>
    </location>
</feature>
<feature type="glycosylation site" description="N-linked (GlcNAc...) asparagine" evidence="3">
    <location>
        <position position="312"/>
    </location>
</feature>
<feature type="glycosylation site" description="N-linked (GlcNAc...) asparagine" evidence="3">
    <location>
        <position position="420"/>
    </location>
</feature>
<feature type="glycosylation site" description="N-linked (GlcNAc...) asparagine" evidence="3">
    <location>
        <position position="889"/>
    </location>
</feature>
<feature type="glycosylation site" description="N-linked (GlcNAc...) asparagine" evidence="3">
    <location>
        <position position="921"/>
    </location>
</feature>
<feature type="splice variant" id="VSP_009816" description="In isoform 2." evidence="10">
    <location>
        <begin position="1"/>
        <end position="1155"/>
    </location>
</feature>
<feature type="splice variant" id="VSP_009817" description="In isoform 3." evidence="12">
    <location>
        <begin position="1137"/>
        <end position="1361"/>
    </location>
</feature>
<feature type="sequence conflict" description="In Ref. 3; BAC29586." evidence="13" ref="3">
    <original>K</original>
    <variation>E</variation>
    <location>
        <position position="197"/>
    </location>
</feature>
<feature type="sequence conflict" description="In Ref. 2; BAD02452." evidence="13" ref="2">
    <original>I</original>
    <variation>V</variation>
    <location>
        <position position="590"/>
    </location>
</feature>
<feature type="sequence conflict" description="In Ref. 3; BAC29586." evidence="13" ref="3">
    <original>K</original>
    <variation>N</variation>
    <location>
        <position position="662"/>
    </location>
</feature>
<feature type="sequence conflict" description="In Ref. 3; BAC29586." evidence="13" ref="3">
    <original>F</original>
    <variation>L</variation>
    <location>
        <position position="880"/>
    </location>
</feature>
<feature type="sequence conflict" description="In Ref. 1; AAG41062." evidence="13" ref="1">
    <original>ILQ</original>
    <variation>PEF</variation>
    <location>
        <begin position="1268"/>
        <end position="1270"/>
    </location>
</feature>
<organism>
    <name type="scientific">Mus musculus</name>
    <name type="common">Mouse</name>
    <dbReference type="NCBI Taxonomy" id="10090"/>
    <lineage>
        <taxon>Eukaryota</taxon>
        <taxon>Metazoa</taxon>
        <taxon>Chordata</taxon>
        <taxon>Craniata</taxon>
        <taxon>Vertebrata</taxon>
        <taxon>Euteleostomi</taxon>
        <taxon>Mammalia</taxon>
        <taxon>Eutheria</taxon>
        <taxon>Euarchontoglires</taxon>
        <taxon>Glires</taxon>
        <taxon>Rodentia</taxon>
        <taxon>Myomorpha</taxon>
        <taxon>Muroidea</taxon>
        <taxon>Muridae</taxon>
        <taxon>Murinae</taxon>
        <taxon>Mus</taxon>
        <taxon>Mus</taxon>
    </lineage>
</organism>
<sequence>MRASGRHDVSLKIVLATGCLLLANFSGASSAVATECPDQSPELQPWSPGHNRDYQVHIGHGRKLLLTSSATVHSITISGGGKLVIKDHHEHIVLRTRYILIDDGGELHAGSALCPFEGNFSIVLYGRADENILPDPYYGLKYIGVDKGGTLELHGQKKLSWTFLNKTLHPGGMQEGGYFFERSWGHRGVIVHVIDAKLGTVVHSDRFDTYRSKKESERLVQYLNAVPDGRILSVAVNDEGSRNLDDTARKAMTKLGSKHFLHLGFRHPWSFITVKGNPSSSVEDHIEYHGHKGSAAARVFKLFQTEHGEHFNVSSSSEWVQDVEWTEWFDHDKVPQSKGGEKISDLRAAYPGKICNRPIDIQATTMDGVALSTEVVYKNGQDYRFACYTRGRACRSYRVRFLCGKPVRPKLTVSIDTNVNSTILSLVDNVRSWRPGDTLVVASTDYSMYQAEEFRVLPCKACTSTQVKVAGKPQYLHIGEEIDGVDMRAEVGLLTRNIVVMGEMEDRCYPYTNHICDFFDFDTFGGHIKFALGFKAAHLEGVELKYMGQQLVGQYPIHFHLAGDLDEQGGYDPPTYIRDLSIHHTFSRCITVHGSNGLLIKDVVGYNSLGHCFFTEDGPEERNTFDHCLGLLVKSGTLLPSDRDSRMCKVITEDSYPGYIPKPRQDCNAVSTFWMANPNNNLINCAAAGSEETGFWFIFHHVPTGPSVGMYSPGYSEHIPLGKFYNNRAHSNYRAGMIIDNGVKTTEASAKDKRPFLSIISARYSPHQDADPLKPREPAIIRHFTAYKNQDHGAWLRGGDVWLDSCRFADNGIGLTLASGGTFPYDDGSKQEIKNSLFVGESGNVGTEMMDNRIWGPGGLDHSGRTLPIGQNFPIRGIQFYDGPINIQNCTFRKFAALEGRHTSALAFRLNNAWQSCPHNNVTNIAFEDVPITSRVFFGEPGPWFNQLDMDGDKTSVFHDLDGSVSEYPGSYLTKDDNWLVRHPDCINVPDWRGAICSGRYAQMYIQAYKSSNLRMKIIKNDFPSHPLYLEGALTRSTHYQQYQPVITLQKGYTIHWDQTAPAELAIWLINFNKGDWIRVGLCYPRGTTFSILSDVHNRLLKQTSKTGTFVRTLQMDKVEQSYPGRSHYYWDEDSGLLFLKLKAQNEREKFAFCSMKGCERIKIKALLPRNAGISDCTATAYPRFTERAIVDVPMPRKLFGAQLKTKDHFLEVKMESSRQHFFHLRNDFAYIEVDGRRYPCSEDGIQIVVIDGSRGHVVSHGSFRNAILQGIPWQLFNYVAAIPDNSIVLMASKGRYITRGPWTRVLEKLGADKGLKLKEKMAFVGFKGSFRPIWVTLETEDHKAKIFQVVPIPVVRKKKL</sequence>
<protein>
    <recommendedName>
        <fullName>Cell migration-inducing and hyaluronan-binding protein</fullName>
        <ecNumber evidence="2 9">3.2.1.35</ecNumber>
    </recommendedName>
    <alternativeName>
        <fullName>Hyaluronan binding protein involved in hyaluronan depolymerization</fullName>
    </alternativeName>
    <alternativeName>
        <fullName>Protein 12H19.01.T7</fullName>
    </alternativeName>
</protein>
<keyword id="KW-0025">Alternative splicing</keyword>
<keyword id="KW-1003">Cell membrane</keyword>
<keyword id="KW-0168">Coated pit</keyword>
<keyword id="KW-0963">Cytoplasm</keyword>
<keyword id="KW-0256">Endoplasmic reticulum</keyword>
<keyword id="KW-0325">Glycoprotein</keyword>
<keyword id="KW-0326">Glycosidase</keyword>
<keyword id="KW-0373">Hyaluronic acid</keyword>
<keyword id="KW-0378">Hydrolase</keyword>
<keyword id="KW-0430">Lectin</keyword>
<keyword id="KW-0472">Membrane</keyword>
<keyword id="KW-0539">Nucleus</keyword>
<keyword id="KW-1185">Reference proteome</keyword>
<keyword id="KW-0677">Repeat</keyword>
<keyword id="KW-0964">Secreted</keyword>
<keyword id="KW-0732">Signal</keyword>
<reference key="1">
    <citation type="journal article" date="2001" name="Genomics">
        <title>Identification of mesoderm development (mesd) candidate genes by comparative mapping and genome sequence analysis.</title>
        <authorList>
            <person name="Wines M.E."/>
            <person name="Lee L."/>
            <person name="Katari M.S."/>
            <person name="Zhang L."/>
            <person name="DeRossi C."/>
            <person name="Shi Y."/>
            <person name="Perkins S."/>
            <person name="Feldman M."/>
            <person name="McCombie W.R."/>
            <person name="Holdener B.C."/>
        </authorList>
    </citation>
    <scope>NUCLEOTIDE SEQUENCE [MRNA] (ISOFORM 2)</scope>
    <scope>NUCLEOTIDE SEQUENCE OF 901-1293 (ISOFORM 1)</scope>
    <scope>TISSUE SPECIFICITY</scope>
    <scope>DEVELOPMENTAL STAGE</scope>
    <source>
        <strain>Swiss Webster / NIH</strain>
    </source>
</reference>
<reference key="2">
    <citation type="journal article" date="2003" name="J. Hum. Genet.">
        <title>Mutations in the gene encoding KIAA1199 protein, an inner-ear protein expressed in Deiters' cells and the fibrocytes, as the cause of nonsyndromic hearing loss.</title>
        <authorList>
            <person name="Abe S."/>
            <person name="Usami S."/>
            <person name="Nakamura Y."/>
        </authorList>
    </citation>
    <scope>NUCLEOTIDE SEQUENCE [MRNA]</scope>
    <scope>TISSUE SPECIFICITY</scope>
</reference>
<reference key="3">
    <citation type="journal article" date="2005" name="Science">
        <title>The transcriptional landscape of the mammalian genome.</title>
        <authorList>
            <person name="Carninci P."/>
            <person name="Kasukawa T."/>
            <person name="Katayama S."/>
            <person name="Gough J."/>
            <person name="Frith M.C."/>
            <person name="Maeda N."/>
            <person name="Oyama R."/>
            <person name="Ravasi T."/>
            <person name="Lenhard B."/>
            <person name="Wells C."/>
            <person name="Kodzius R."/>
            <person name="Shimokawa K."/>
            <person name="Bajic V.B."/>
            <person name="Brenner S.E."/>
            <person name="Batalov S."/>
            <person name="Forrest A.R."/>
            <person name="Zavolan M."/>
            <person name="Davis M.J."/>
            <person name="Wilming L.G."/>
            <person name="Aidinis V."/>
            <person name="Allen J.E."/>
            <person name="Ambesi-Impiombato A."/>
            <person name="Apweiler R."/>
            <person name="Aturaliya R.N."/>
            <person name="Bailey T.L."/>
            <person name="Bansal M."/>
            <person name="Baxter L."/>
            <person name="Beisel K.W."/>
            <person name="Bersano T."/>
            <person name="Bono H."/>
            <person name="Chalk A.M."/>
            <person name="Chiu K.P."/>
            <person name="Choudhary V."/>
            <person name="Christoffels A."/>
            <person name="Clutterbuck D.R."/>
            <person name="Crowe M.L."/>
            <person name="Dalla E."/>
            <person name="Dalrymple B.P."/>
            <person name="de Bono B."/>
            <person name="Della Gatta G."/>
            <person name="di Bernardo D."/>
            <person name="Down T."/>
            <person name="Engstrom P."/>
            <person name="Fagiolini M."/>
            <person name="Faulkner G."/>
            <person name="Fletcher C.F."/>
            <person name="Fukushima T."/>
            <person name="Furuno M."/>
            <person name="Futaki S."/>
            <person name="Gariboldi M."/>
            <person name="Georgii-Hemming P."/>
            <person name="Gingeras T.R."/>
            <person name="Gojobori T."/>
            <person name="Green R.E."/>
            <person name="Gustincich S."/>
            <person name="Harbers M."/>
            <person name="Hayashi Y."/>
            <person name="Hensch T.K."/>
            <person name="Hirokawa N."/>
            <person name="Hill D."/>
            <person name="Huminiecki L."/>
            <person name="Iacono M."/>
            <person name="Ikeo K."/>
            <person name="Iwama A."/>
            <person name="Ishikawa T."/>
            <person name="Jakt M."/>
            <person name="Kanapin A."/>
            <person name="Katoh M."/>
            <person name="Kawasawa Y."/>
            <person name="Kelso J."/>
            <person name="Kitamura H."/>
            <person name="Kitano H."/>
            <person name="Kollias G."/>
            <person name="Krishnan S.P."/>
            <person name="Kruger A."/>
            <person name="Kummerfeld S.K."/>
            <person name="Kurochkin I.V."/>
            <person name="Lareau L.F."/>
            <person name="Lazarevic D."/>
            <person name="Lipovich L."/>
            <person name="Liu J."/>
            <person name="Liuni S."/>
            <person name="McWilliam S."/>
            <person name="Madan Babu M."/>
            <person name="Madera M."/>
            <person name="Marchionni L."/>
            <person name="Matsuda H."/>
            <person name="Matsuzawa S."/>
            <person name="Miki H."/>
            <person name="Mignone F."/>
            <person name="Miyake S."/>
            <person name="Morris K."/>
            <person name="Mottagui-Tabar S."/>
            <person name="Mulder N."/>
            <person name="Nakano N."/>
            <person name="Nakauchi H."/>
            <person name="Ng P."/>
            <person name="Nilsson R."/>
            <person name="Nishiguchi S."/>
            <person name="Nishikawa S."/>
            <person name="Nori F."/>
            <person name="Ohara O."/>
            <person name="Okazaki Y."/>
            <person name="Orlando V."/>
            <person name="Pang K.C."/>
            <person name="Pavan W.J."/>
            <person name="Pavesi G."/>
            <person name="Pesole G."/>
            <person name="Petrovsky N."/>
            <person name="Piazza S."/>
            <person name="Reed J."/>
            <person name="Reid J.F."/>
            <person name="Ring B.Z."/>
            <person name="Ringwald M."/>
            <person name="Rost B."/>
            <person name="Ruan Y."/>
            <person name="Salzberg S.L."/>
            <person name="Sandelin A."/>
            <person name="Schneider C."/>
            <person name="Schoenbach C."/>
            <person name="Sekiguchi K."/>
            <person name="Semple C.A."/>
            <person name="Seno S."/>
            <person name="Sessa L."/>
            <person name="Sheng Y."/>
            <person name="Shibata Y."/>
            <person name="Shimada H."/>
            <person name="Shimada K."/>
            <person name="Silva D."/>
            <person name="Sinclair B."/>
            <person name="Sperling S."/>
            <person name="Stupka E."/>
            <person name="Sugiura K."/>
            <person name="Sultana R."/>
            <person name="Takenaka Y."/>
            <person name="Taki K."/>
            <person name="Tammoja K."/>
            <person name="Tan S.L."/>
            <person name="Tang S."/>
            <person name="Taylor M.S."/>
            <person name="Tegner J."/>
            <person name="Teichmann S.A."/>
            <person name="Ueda H.R."/>
            <person name="van Nimwegen E."/>
            <person name="Verardo R."/>
            <person name="Wei C.L."/>
            <person name="Yagi K."/>
            <person name="Yamanishi H."/>
            <person name="Zabarovsky E."/>
            <person name="Zhu S."/>
            <person name="Zimmer A."/>
            <person name="Hide W."/>
            <person name="Bult C."/>
            <person name="Grimmond S.M."/>
            <person name="Teasdale R.D."/>
            <person name="Liu E.T."/>
            <person name="Brusic V."/>
            <person name="Quackenbush J."/>
            <person name="Wahlestedt C."/>
            <person name="Mattick J.S."/>
            <person name="Hume D.A."/>
            <person name="Kai C."/>
            <person name="Sasaki D."/>
            <person name="Tomaru Y."/>
            <person name="Fukuda S."/>
            <person name="Kanamori-Katayama M."/>
            <person name="Suzuki M."/>
            <person name="Aoki J."/>
            <person name="Arakawa T."/>
            <person name="Iida J."/>
            <person name="Imamura K."/>
            <person name="Itoh M."/>
            <person name="Kato T."/>
            <person name="Kawaji H."/>
            <person name="Kawagashira N."/>
            <person name="Kawashima T."/>
            <person name="Kojima M."/>
            <person name="Kondo S."/>
            <person name="Konno H."/>
            <person name="Nakano K."/>
            <person name="Ninomiya N."/>
            <person name="Nishio T."/>
            <person name="Okada M."/>
            <person name="Plessy C."/>
            <person name="Shibata K."/>
            <person name="Shiraki T."/>
            <person name="Suzuki S."/>
            <person name="Tagami M."/>
            <person name="Waki K."/>
            <person name="Watahiki A."/>
            <person name="Okamura-Oho Y."/>
            <person name="Suzuki H."/>
            <person name="Kawai J."/>
            <person name="Hayashizaki Y."/>
        </authorList>
    </citation>
    <scope>NUCLEOTIDE SEQUENCE [LARGE SCALE MRNA] (ISOFORM 3)</scope>
    <source>
        <strain>C57BL/6J</strain>
        <tissue>Vagina</tissue>
    </source>
</reference>
<reference key="4">
    <citation type="journal article" date="2009" name="PLoS Biol.">
        <title>Lineage-specific biology revealed by a finished genome assembly of the mouse.</title>
        <authorList>
            <person name="Church D.M."/>
            <person name="Goodstadt L."/>
            <person name="Hillier L.W."/>
            <person name="Zody M.C."/>
            <person name="Goldstein S."/>
            <person name="She X."/>
            <person name="Bult C.J."/>
            <person name="Agarwala R."/>
            <person name="Cherry J.L."/>
            <person name="DiCuccio M."/>
            <person name="Hlavina W."/>
            <person name="Kapustin Y."/>
            <person name="Meric P."/>
            <person name="Maglott D."/>
            <person name="Birtle Z."/>
            <person name="Marques A.C."/>
            <person name="Graves T."/>
            <person name="Zhou S."/>
            <person name="Teague B."/>
            <person name="Potamousis K."/>
            <person name="Churas C."/>
            <person name="Place M."/>
            <person name="Herschleb J."/>
            <person name="Runnheim R."/>
            <person name="Forrest D."/>
            <person name="Amos-Landgraf J."/>
            <person name="Schwartz D.C."/>
            <person name="Cheng Z."/>
            <person name="Lindblad-Toh K."/>
            <person name="Eichler E.E."/>
            <person name="Ponting C.P."/>
        </authorList>
    </citation>
    <scope>NUCLEOTIDE SEQUENCE [LARGE SCALE GENOMIC DNA]</scope>
    <source>
        <strain>C57BL/6J</strain>
    </source>
</reference>
<reference key="5">
    <citation type="journal article" date="2004" name="Genome Res.">
        <title>The status, quality, and expansion of the NIH full-length cDNA project: the Mammalian Gene Collection (MGC).</title>
        <authorList>
            <consortium name="The MGC Project Team"/>
        </authorList>
    </citation>
    <scope>NUCLEOTIDE SEQUENCE [LARGE SCALE MRNA] OF 962-1361 (ISOFORM 1)</scope>
    <source>
        <strain>C57BL/6J</strain>
        <tissue>Brain</tissue>
    </source>
</reference>
<reference key="6">
    <citation type="journal article" date="2008" name="Neuroscience">
        <title>The localization of proteins encoded by CRYM, KIAA1199, UBA52, COL9A3, and COL9A1, genes highly expressed in the cochlea.</title>
        <authorList>
            <person name="Usami S."/>
            <person name="Takumi Y."/>
            <person name="Suzuki N."/>
            <person name="Oguchi T."/>
            <person name="Oshima A."/>
            <person name="Suzuki H."/>
            <person name="Kitoh R."/>
            <person name="Abe S."/>
            <person name="Sasaki A."/>
            <person name="Matsubara A."/>
        </authorList>
    </citation>
    <scope>SUBCELLULAR LOCATION</scope>
    <scope>TISSUE SPECIFICITY</scope>
</reference>
<reference key="7">
    <citation type="journal article" date="2013" name="FEBS Open Bio">
        <title>Murine homologue of the human KIAA1199 is implicated in hyaluronan binding and depolymerization.</title>
        <authorList>
            <person name="Yoshida H."/>
            <person name="Nagaoka A."/>
            <person name="Nakamura S."/>
            <person name="Sugiyama Y."/>
            <person name="Okada Y."/>
            <person name="Inoue S."/>
        </authorList>
    </citation>
    <scope>FUNCTION IN HYALURONAN DEGRADATION</scope>
    <scope>CATALYTIC ACTIVITY</scope>
    <scope>HYALURONAN-BINDING</scope>
    <scope>SUBCELLULAR LOCATION</scope>
</reference>
<accession>Q8BI06</accession>
<accession>E9QJS6</accession>
<accession>Q6L9J4</accession>
<accession>Q9EPQ3</accession>
<accession>Q9EPQ4</accession>
<evidence type="ECO:0000250" key="1"/>
<evidence type="ECO:0000250" key="2">
    <source>
        <dbReference type="UniProtKB" id="Q8WUJ3"/>
    </source>
</evidence>
<evidence type="ECO:0000255" key="3"/>
<evidence type="ECO:0000255" key="4">
    <source>
        <dbReference type="PROSITE-ProRule" id="PRU00817"/>
    </source>
</evidence>
<evidence type="ECO:0000255" key="5">
    <source>
        <dbReference type="PROSITE-ProRule" id="PRU01375"/>
    </source>
</evidence>
<evidence type="ECO:0000269" key="6">
    <source>
    </source>
</evidence>
<evidence type="ECO:0000269" key="7">
    <source>
    </source>
</evidence>
<evidence type="ECO:0000269" key="8">
    <source>
    </source>
</evidence>
<evidence type="ECO:0000269" key="9">
    <source>
    </source>
</evidence>
<evidence type="ECO:0000303" key="10">
    <source>
    </source>
</evidence>
<evidence type="ECO:0000303" key="11">
    <source>
    </source>
</evidence>
<evidence type="ECO:0000303" key="12">
    <source>
    </source>
</evidence>
<evidence type="ECO:0000305" key="13"/>
<gene>
    <name type="primary">Cemip</name>
    <name evidence="2" type="synonym">Hybid</name>
    <name evidence="11" type="synonym">Kiaa1199</name>
</gene>
<dbReference type="EC" id="3.2.1.35" evidence="2 9"/>
<dbReference type="EMBL" id="AY007814">
    <property type="protein sequence ID" value="AAG41061.1"/>
    <property type="molecule type" value="mRNA"/>
</dbReference>
<dbReference type="EMBL" id="AY007815">
    <property type="protein sequence ID" value="AAG41062.1"/>
    <property type="molecule type" value="mRNA"/>
</dbReference>
<dbReference type="EMBL" id="AB103331">
    <property type="protein sequence ID" value="BAD02452.1"/>
    <property type="molecule type" value="mRNA"/>
</dbReference>
<dbReference type="EMBL" id="AK036809">
    <property type="protein sequence ID" value="BAC29586.1"/>
    <property type="status" value="ALT_SEQ"/>
    <property type="molecule type" value="mRNA"/>
</dbReference>
<dbReference type="EMBL" id="AC101659">
    <property type="status" value="NOT_ANNOTATED_CDS"/>
    <property type="molecule type" value="Genomic_DNA"/>
</dbReference>
<dbReference type="EMBL" id="AC154141">
    <property type="status" value="NOT_ANNOTATED_CDS"/>
    <property type="molecule type" value="Genomic_DNA"/>
</dbReference>
<dbReference type="EMBL" id="BC056981">
    <property type="protein sequence ID" value="AAH56981.1"/>
    <property type="status" value="ALT_INIT"/>
    <property type="molecule type" value="mRNA"/>
</dbReference>
<dbReference type="CCDS" id="CCDS21416.1">
    <molecule id="Q8BI06-1"/>
</dbReference>
<dbReference type="RefSeq" id="NP_109653.3">
    <molecule id="Q8BI06-1"/>
    <property type="nucleotide sequence ID" value="NM_030728.4"/>
</dbReference>
<dbReference type="RefSeq" id="XP_006508416.1">
    <molecule id="Q8BI06-1"/>
    <property type="nucleotide sequence ID" value="XM_006508353.4"/>
</dbReference>
<dbReference type="RefSeq" id="XP_006508417.1">
    <molecule id="Q8BI06-1"/>
    <property type="nucleotide sequence ID" value="XM_006508354.4"/>
</dbReference>
<dbReference type="RefSeq" id="XP_017167893.1">
    <property type="nucleotide sequence ID" value="XM_017312404.1"/>
</dbReference>
<dbReference type="SMR" id="Q8BI06"/>
<dbReference type="BioGRID" id="219857">
    <property type="interactions" value="3"/>
</dbReference>
<dbReference type="FunCoup" id="Q8BI06">
    <property type="interactions" value="517"/>
</dbReference>
<dbReference type="IntAct" id="Q8BI06">
    <property type="interactions" value="1"/>
</dbReference>
<dbReference type="STRING" id="10090.ENSMUSP00000063277"/>
<dbReference type="GlyCosmos" id="Q8BI06">
    <property type="glycosylation" value="6 sites, No reported glycans"/>
</dbReference>
<dbReference type="GlyGen" id="Q8BI06">
    <property type="glycosylation" value="7 sites, 3 N-linked glycans (3 sites)"/>
</dbReference>
<dbReference type="iPTMnet" id="Q8BI06"/>
<dbReference type="PhosphoSitePlus" id="Q8BI06"/>
<dbReference type="PaxDb" id="10090-ENSMUSP00000063277"/>
<dbReference type="ProteomicsDB" id="281532">
    <molecule id="Q8BI06-1"/>
</dbReference>
<dbReference type="ProteomicsDB" id="281533">
    <molecule id="Q8BI06-2"/>
</dbReference>
<dbReference type="ProteomicsDB" id="281534">
    <molecule id="Q8BI06-3"/>
</dbReference>
<dbReference type="Pumba" id="Q8BI06"/>
<dbReference type="Antibodypedia" id="27890">
    <property type="antibodies" value="248 antibodies from 26 providers"/>
</dbReference>
<dbReference type="Ensembl" id="ENSMUST00000064174.12">
    <molecule id="Q8BI06-1"/>
    <property type="protein sequence ID" value="ENSMUSP00000063277.6"/>
    <property type="gene ID" value="ENSMUSG00000052353.14"/>
</dbReference>
<dbReference type="GeneID" id="80982"/>
<dbReference type="KEGG" id="mmu:80982"/>
<dbReference type="UCSC" id="uc009idy.3">
    <molecule id="Q8BI06-2"/>
    <property type="organism name" value="mouse"/>
</dbReference>
<dbReference type="UCSC" id="uc009idz.2">
    <molecule id="Q8BI06-1"/>
    <property type="organism name" value="mouse"/>
</dbReference>
<dbReference type="AGR" id="MGI:2443629"/>
<dbReference type="CTD" id="57214"/>
<dbReference type="MGI" id="MGI:2443629">
    <property type="gene designation" value="Cemip"/>
</dbReference>
<dbReference type="VEuPathDB" id="HostDB:ENSMUSG00000052353"/>
<dbReference type="eggNOG" id="ENOG502QT0K">
    <property type="taxonomic scope" value="Eukaryota"/>
</dbReference>
<dbReference type="GeneTree" id="ENSGT00940000153636"/>
<dbReference type="HOGENOM" id="CLU_005606_1_0_1"/>
<dbReference type="InParanoid" id="Q8BI06"/>
<dbReference type="OMA" id="YGRADED"/>
<dbReference type="OrthoDB" id="120976at2759"/>
<dbReference type="PhylomeDB" id="Q8BI06"/>
<dbReference type="TreeFam" id="TF316575"/>
<dbReference type="Reactome" id="R-MMU-2142850">
    <property type="pathway name" value="Hyaluronan biosynthesis and export"/>
</dbReference>
<dbReference type="BioGRID-ORCS" id="80982">
    <property type="hits" value="1 hit in 77 CRISPR screens"/>
</dbReference>
<dbReference type="ChiTaRS" id="Cemip">
    <property type="organism name" value="mouse"/>
</dbReference>
<dbReference type="PRO" id="PR:Q8BI06"/>
<dbReference type="Proteomes" id="UP000000589">
    <property type="component" value="Chromosome 7"/>
</dbReference>
<dbReference type="RNAct" id="Q8BI06">
    <property type="molecule type" value="protein"/>
</dbReference>
<dbReference type="Bgee" id="ENSMUSG00000052353">
    <property type="expression patterns" value="Expressed in vault of skull and 118 other cell types or tissues"/>
</dbReference>
<dbReference type="GO" id="GO:0045334">
    <property type="term" value="C:clathrin-coated endocytic vesicle"/>
    <property type="evidence" value="ECO:0000250"/>
    <property type="project" value="UniProtKB"/>
</dbReference>
<dbReference type="GO" id="GO:0005905">
    <property type="term" value="C:clathrin-coated pit"/>
    <property type="evidence" value="ECO:0007669"/>
    <property type="project" value="UniProtKB-SubCell"/>
</dbReference>
<dbReference type="GO" id="GO:0030665">
    <property type="term" value="C:clathrin-coated vesicle membrane"/>
    <property type="evidence" value="ECO:0000314"/>
    <property type="project" value="UniProtKB"/>
</dbReference>
<dbReference type="GO" id="GO:0005737">
    <property type="term" value="C:cytoplasm"/>
    <property type="evidence" value="ECO:0000314"/>
    <property type="project" value="MGI"/>
</dbReference>
<dbReference type="GO" id="GO:0005783">
    <property type="term" value="C:endoplasmic reticulum"/>
    <property type="evidence" value="ECO:0000250"/>
    <property type="project" value="UniProtKB"/>
</dbReference>
<dbReference type="GO" id="GO:0005576">
    <property type="term" value="C:extracellular region"/>
    <property type="evidence" value="ECO:0007669"/>
    <property type="project" value="UniProtKB-SubCell"/>
</dbReference>
<dbReference type="GO" id="GO:0001650">
    <property type="term" value="C:fibrillar center"/>
    <property type="evidence" value="ECO:0007669"/>
    <property type="project" value="Ensembl"/>
</dbReference>
<dbReference type="GO" id="GO:0031965">
    <property type="term" value="C:nuclear membrane"/>
    <property type="evidence" value="ECO:0007669"/>
    <property type="project" value="Ensembl"/>
</dbReference>
<dbReference type="GO" id="GO:0005886">
    <property type="term" value="C:plasma membrane"/>
    <property type="evidence" value="ECO:0000250"/>
    <property type="project" value="UniProtKB"/>
</dbReference>
<dbReference type="GO" id="GO:0030246">
    <property type="term" value="F:carbohydrate binding"/>
    <property type="evidence" value="ECO:0007669"/>
    <property type="project" value="UniProtKB-KW"/>
</dbReference>
<dbReference type="GO" id="GO:0032050">
    <property type="term" value="F:clathrin heavy chain binding"/>
    <property type="evidence" value="ECO:0000250"/>
    <property type="project" value="UniProtKB"/>
</dbReference>
<dbReference type="GO" id="GO:0046923">
    <property type="term" value="F:ER retention sequence binding"/>
    <property type="evidence" value="ECO:0000250"/>
    <property type="project" value="UniProtKB"/>
</dbReference>
<dbReference type="GO" id="GO:0005540">
    <property type="term" value="F:hyaluronic acid binding"/>
    <property type="evidence" value="ECO:0000314"/>
    <property type="project" value="UniProtKB"/>
</dbReference>
<dbReference type="GO" id="GO:0004415">
    <property type="term" value="F:hyalurononglucosaminidase activity"/>
    <property type="evidence" value="ECO:0000314"/>
    <property type="project" value="UniProtKB"/>
</dbReference>
<dbReference type="GO" id="GO:0030214">
    <property type="term" value="P:hyaluronan catabolic process"/>
    <property type="evidence" value="ECO:0000314"/>
    <property type="project" value="UniProtKB"/>
</dbReference>
<dbReference type="GO" id="GO:0030212">
    <property type="term" value="P:hyaluronan metabolic process"/>
    <property type="evidence" value="ECO:0000315"/>
    <property type="project" value="MGI"/>
</dbReference>
<dbReference type="GO" id="GO:0030335">
    <property type="term" value="P:positive regulation of cell migration"/>
    <property type="evidence" value="ECO:0000250"/>
    <property type="project" value="UniProtKB"/>
</dbReference>
<dbReference type="GO" id="GO:0010800">
    <property type="term" value="P:positive regulation of peptidyl-threonine phosphorylation"/>
    <property type="evidence" value="ECO:0000250"/>
    <property type="project" value="UniProtKB"/>
</dbReference>
<dbReference type="GO" id="GO:1900020">
    <property type="term" value="P:positive regulation of protein kinase C activity"/>
    <property type="evidence" value="ECO:0000250"/>
    <property type="project" value="UniProtKB"/>
</dbReference>
<dbReference type="GO" id="GO:0090314">
    <property type="term" value="P:positive regulation of protein targeting to membrane"/>
    <property type="evidence" value="ECO:0000250"/>
    <property type="project" value="UniProtKB"/>
</dbReference>
<dbReference type="GO" id="GO:0051281">
    <property type="term" value="P:positive regulation of release of sequestered calcium ion into cytosol"/>
    <property type="evidence" value="ECO:0000250"/>
    <property type="project" value="UniProtKB"/>
</dbReference>
<dbReference type="GO" id="GO:0007605">
    <property type="term" value="P:sensory perception of sound"/>
    <property type="evidence" value="ECO:0007669"/>
    <property type="project" value="Ensembl"/>
</dbReference>
<dbReference type="CDD" id="cd13938">
    <property type="entry name" value="PANDER_like_TMEM2"/>
    <property type="match status" value="1"/>
</dbReference>
<dbReference type="InterPro" id="IPR052252">
    <property type="entry name" value="CEMIP/CEMIP2"/>
</dbReference>
<dbReference type="InterPro" id="IPR055401">
    <property type="entry name" value="CEMIP_beta-hel_dom"/>
</dbReference>
<dbReference type="InterPro" id="IPR055400">
    <property type="entry name" value="CEMIP_X"/>
</dbReference>
<dbReference type="InterPro" id="IPR019316">
    <property type="entry name" value="G8_domain"/>
</dbReference>
<dbReference type="InterPro" id="IPR039477">
    <property type="entry name" value="ILEI/PANDER_dom"/>
</dbReference>
<dbReference type="InterPro" id="IPR011050">
    <property type="entry name" value="Pectin_lyase_fold/virulence"/>
</dbReference>
<dbReference type="InterPro" id="IPR039473">
    <property type="entry name" value="TMEM2_PANDER-like"/>
</dbReference>
<dbReference type="InterPro" id="IPR025155">
    <property type="entry name" value="WxxW_domain"/>
</dbReference>
<dbReference type="PANTHER" id="PTHR15535:SF15">
    <property type="entry name" value="CELL MIGRATION-INDUCING AND HYALURONAN-BINDING PROTEIN"/>
    <property type="match status" value="1"/>
</dbReference>
<dbReference type="PANTHER" id="PTHR15535">
    <property type="entry name" value="TRANSMEMBRANE PROTEIN 2-RELATED"/>
    <property type="match status" value="1"/>
</dbReference>
<dbReference type="Pfam" id="PF24606">
    <property type="entry name" value="CEMIP_beta-hel"/>
    <property type="match status" value="1"/>
</dbReference>
<dbReference type="Pfam" id="PF24605">
    <property type="entry name" value="CEMIP_X"/>
    <property type="match status" value="1"/>
</dbReference>
<dbReference type="Pfam" id="PF10162">
    <property type="entry name" value="G8"/>
    <property type="match status" value="1"/>
</dbReference>
<dbReference type="Pfam" id="PF15711">
    <property type="entry name" value="ILEI"/>
    <property type="match status" value="2"/>
</dbReference>
<dbReference type="Pfam" id="PF13330">
    <property type="entry name" value="Mucin2_WxxW"/>
    <property type="match status" value="2"/>
</dbReference>
<dbReference type="SMART" id="SM01225">
    <property type="entry name" value="G8"/>
    <property type="match status" value="1"/>
</dbReference>
<dbReference type="SUPFAM" id="SSF51126">
    <property type="entry name" value="Pectin lyase-like"/>
    <property type="match status" value="2"/>
</dbReference>
<dbReference type="PROSITE" id="PS51484">
    <property type="entry name" value="G8"/>
    <property type="match status" value="1"/>
</dbReference>
<dbReference type="PROSITE" id="PS52031">
    <property type="entry name" value="GG_LECTIN"/>
    <property type="match status" value="2"/>
</dbReference>
<name>CEMIP_MOUSE</name>